<proteinExistence type="evidence at protein level"/>
<feature type="signal peptide" evidence="2">
    <location>
        <begin position="1"/>
        <end position="21"/>
    </location>
</feature>
<feature type="chain" id="PRO_0000022452" description="Seminal vesicle secretory protein 4">
    <location>
        <begin position="22"/>
        <end position="113"/>
    </location>
</feature>
<feature type="region of interest" description="Disordered" evidence="1">
    <location>
        <begin position="31"/>
        <end position="113"/>
    </location>
</feature>
<feature type="compositionally biased region" description="Low complexity" evidence="1">
    <location>
        <begin position="38"/>
        <end position="50"/>
    </location>
</feature>
<feature type="compositionally biased region" description="Low complexity" evidence="1">
    <location>
        <begin position="83"/>
        <end position="98"/>
    </location>
</feature>
<feature type="sequence conflict" description="In Ref. 3; AAI15605/AAI15606 and 4; AAA40158." evidence="2" ref="3 4">
    <original>M</original>
    <variation>T</variation>
    <location>
        <position position="41"/>
    </location>
</feature>
<feature type="sequence conflict" description="In Ref. 4; AA sequence." evidence="2" ref="4">
    <original>I</original>
    <variation>K</variation>
    <location>
        <position position="63"/>
    </location>
</feature>
<dbReference type="EMBL" id="AK020349">
    <property type="protein sequence ID" value="BAB32080.1"/>
    <property type="molecule type" value="mRNA"/>
</dbReference>
<dbReference type="EMBL" id="AL590429">
    <property type="status" value="NOT_ANNOTATED_CDS"/>
    <property type="molecule type" value="Genomic_DNA"/>
</dbReference>
<dbReference type="EMBL" id="BC115604">
    <property type="protein sequence ID" value="AAI15605.1"/>
    <property type="molecule type" value="mRNA"/>
</dbReference>
<dbReference type="EMBL" id="BC115605">
    <property type="protein sequence ID" value="AAI15606.1"/>
    <property type="molecule type" value="mRNA"/>
</dbReference>
<dbReference type="EMBL" id="M35732">
    <property type="protein sequence ID" value="AAA40158.1"/>
    <property type="molecule type" value="mRNA"/>
</dbReference>
<dbReference type="CCDS" id="CCDS17029.1"/>
<dbReference type="PIR" id="A40059">
    <property type="entry name" value="A40059"/>
</dbReference>
<dbReference type="RefSeq" id="NP_033326.1">
    <property type="nucleotide sequence ID" value="NM_009300.3"/>
</dbReference>
<dbReference type="FunCoup" id="P18419">
    <property type="interactions" value="3"/>
</dbReference>
<dbReference type="STRING" id="10090.ENSMUSP00000017142"/>
<dbReference type="iPTMnet" id="P18419"/>
<dbReference type="PhosphoSitePlus" id="P18419"/>
<dbReference type="CPTAC" id="non-CPTAC-3501"/>
<dbReference type="PaxDb" id="10090-ENSMUSP00000017142"/>
<dbReference type="PeptideAtlas" id="P18419"/>
<dbReference type="ProteomicsDB" id="258782"/>
<dbReference type="DNASU" id="20941"/>
<dbReference type="Ensembl" id="ENSMUST00000017142.3">
    <property type="protein sequence ID" value="ENSMUSP00000017142.3"/>
    <property type="gene ID" value="ENSMUSG00000016998.3"/>
</dbReference>
<dbReference type="GeneID" id="20941"/>
<dbReference type="KEGG" id="mmu:20941"/>
<dbReference type="UCSC" id="uc008nue.1">
    <property type="organism name" value="mouse"/>
</dbReference>
<dbReference type="AGR" id="MGI:98450"/>
<dbReference type="CTD" id="20941"/>
<dbReference type="MGI" id="MGI:98450">
    <property type="gene designation" value="Svs4"/>
</dbReference>
<dbReference type="VEuPathDB" id="HostDB:ENSMUSG00000016998"/>
<dbReference type="GeneTree" id="ENSGT00520000057703"/>
<dbReference type="HOGENOM" id="CLU_2157587_0_0_1"/>
<dbReference type="InParanoid" id="P18419"/>
<dbReference type="OMA" id="DGSNMEG"/>
<dbReference type="TreeFam" id="TF353660"/>
<dbReference type="BioGRID-ORCS" id="20941">
    <property type="hits" value="0 hits in 78 CRISPR screens"/>
</dbReference>
<dbReference type="ChiTaRS" id="Svs4">
    <property type="organism name" value="mouse"/>
</dbReference>
<dbReference type="PRO" id="PR:P18419"/>
<dbReference type="Proteomes" id="UP000000589">
    <property type="component" value="Chromosome 2"/>
</dbReference>
<dbReference type="RNAct" id="P18419">
    <property type="molecule type" value="protein"/>
</dbReference>
<dbReference type="Bgee" id="ENSMUSG00000016998">
    <property type="expression patterns" value="Expressed in seminal vesicle and 26 other cell types or tissues"/>
</dbReference>
<dbReference type="GO" id="GO:0005576">
    <property type="term" value="C:extracellular region"/>
    <property type="evidence" value="ECO:0007669"/>
    <property type="project" value="UniProtKB-SubCell"/>
</dbReference>
<dbReference type="InterPro" id="IPR035409">
    <property type="entry name" value="Svs4/5/6"/>
</dbReference>
<dbReference type="PANTHER" id="PTHR17498:SF2">
    <property type="entry name" value="SEMINAL VESICLE SECRETORY PROTEIN 4"/>
    <property type="match status" value="1"/>
</dbReference>
<dbReference type="PANTHER" id="PTHR17498">
    <property type="entry name" value="SEMINAL VESICLE SECRETORY PROTEIN 6-RELATED"/>
    <property type="match status" value="1"/>
</dbReference>
<dbReference type="Pfam" id="PF17381">
    <property type="entry name" value="Svs_4_5_6"/>
    <property type="match status" value="1"/>
</dbReference>
<reference key="1">
    <citation type="journal article" date="2005" name="Science">
        <title>The transcriptional landscape of the mammalian genome.</title>
        <authorList>
            <person name="Carninci P."/>
            <person name="Kasukawa T."/>
            <person name="Katayama S."/>
            <person name="Gough J."/>
            <person name="Frith M.C."/>
            <person name="Maeda N."/>
            <person name="Oyama R."/>
            <person name="Ravasi T."/>
            <person name="Lenhard B."/>
            <person name="Wells C."/>
            <person name="Kodzius R."/>
            <person name="Shimokawa K."/>
            <person name="Bajic V.B."/>
            <person name="Brenner S.E."/>
            <person name="Batalov S."/>
            <person name="Forrest A.R."/>
            <person name="Zavolan M."/>
            <person name="Davis M.J."/>
            <person name="Wilming L.G."/>
            <person name="Aidinis V."/>
            <person name="Allen J.E."/>
            <person name="Ambesi-Impiombato A."/>
            <person name="Apweiler R."/>
            <person name="Aturaliya R.N."/>
            <person name="Bailey T.L."/>
            <person name="Bansal M."/>
            <person name="Baxter L."/>
            <person name="Beisel K.W."/>
            <person name="Bersano T."/>
            <person name="Bono H."/>
            <person name="Chalk A.M."/>
            <person name="Chiu K.P."/>
            <person name="Choudhary V."/>
            <person name="Christoffels A."/>
            <person name="Clutterbuck D.R."/>
            <person name="Crowe M.L."/>
            <person name="Dalla E."/>
            <person name="Dalrymple B.P."/>
            <person name="de Bono B."/>
            <person name="Della Gatta G."/>
            <person name="di Bernardo D."/>
            <person name="Down T."/>
            <person name="Engstrom P."/>
            <person name="Fagiolini M."/>
            <person name="Faulkner G."/>
            <person name="Fletcher C.F."/>
            <person name="Fukushima T."/>
            <person name="Furuno M."/>
            <person name="Futaki S."/>
            <person name="Gariboldi M."/>
            <person name="Georgii-Hemming P."/>
            <person name="Gingeras T.R."/>
            <person name="Gojobori T."/>
            <person name="Green R.E."/>
            <person name="Gustincich S."/>
            <person name="Harbers M."/>
            <person name="Hayashi Y."/>
            <person name="Hensch T.K."/>
            <person name="Hirokawa N."/>
            <person name="Hill D."/>
            <person name="Huminiecki L."/>
            <person name="Iacono M."/>
            <person name="Ikeo K."/>
            <person name="Iwama A."/>
            <person name="Ishikawa T."/>
            <person name="Jakt M."/>
            <person name="Kanapin A."/>
            <person name="Katoh M."/>
            <person name="Kawasawa Y."/>
            <person name="Kelso J."/>
            <person name="Kitamura H."/>
            <person name="Kitano H."/>
            <person name="Kollias G."/>
            <person name="Krishnan S.P."/>
            <person name="Kruger A."/>
            <person name="Kummerfeld S.K."/>
            <person name="Kurochkin I.V."/>
            <person name="Lareau L.F."/>
            <person name="Lazarevic D."/>
            <person name="Lipovich L."/>
            <person name="Liu J."/>
            <person name="Liuni S."/>
            <person name="McWilliam S."/>
            <person name="Madan Babu M."/>
            <person name="Madera M."/>
            <person name="Marchionni L."/>
            <person name="Matsuda H."/>
            <person name="Matsuzawa S."/>
            <person name="Miki H."/>
            <person name="Mignone F."/>
            <person name="Miyake S."/>
            <person name="Morris K."/>
            <person name="Mottagui-Tabar S."/>
            <person name="Mulder N."/>
            <person name="Nakano N."/>
            <person name="Nakauchi H."/>
            <person name="Ng P."/>
            <person name="Nilsson R."/>
            <person name="Nishiguchi S."/>
            <person name="Nishikawa S."/>
            <person name="Nori F."/>
            <person name="Ohara O."/>
            <person name="Okazaki Y."/>
            <person name="Orlando V."/>
            <person name="Pang K.C."/>
            <person name="Pavan W.J."/>
            <person name="Pavesi G."/>
            <person name="Pesole G."/>
            <person name="Petrovsky N."/>
            <person name="Piazza S."/>
            <person name="Reed J."/>
            <person name="Reid J.F."/>
            <person name="Ring B.Z."/>
            <person name="Ringwald M."/>
            <person name="Rost B."/>
            <person name="Ruan Y."/>
            <person name="Salzberg S.L."/>
            <person name="Sandelin A."/>
            <person name="Schneider C."/>
            <person name="Schoenbach C."/>
            <person name="Sekiguchi K."/>
            <person name="Semple C.A."/>
            <person name="Seno S."/>
            <person name="Sessa L."/>
            <person name="Sheng Y."/>
            <person name="Shibata Y."/>
            <person name="Shimada H."/>
            <person name="Shimada K."/>
            <person name="Silva D."/>
            <person name="Sinclair B."/>
            <person name="Sperling S."/>
            <person name="Stupka E."/>
            <person name="Sugiura K."/>
            <person name="Sultana R."/>
            <person name="Takenaka Y."/>
            <person name="Taki K."/>
            <person name="Tammoja K."/>
            <person name="Tan S.L."/>
            <person name="Tang S."/>
            <person name="Taylor M.S."/>
            <person name="Tegner J."/>
            <person name="Teichmann S.A."/>
            <person name="Ueda H.R."/>
            <person name="van Nimwegen E."/>
            <person name="Verardo R."/>
            <person name="Wei C.L."/>
            <person name="Yagi K."/>
            <person name="Yamanishi H."/>
            <person name="Zabarovsky E."/>
            <person name="Zhu S."/>
            <person name="Zimmer A."/>
            <person name="Hide W."/>
            <person name="Bult C."/>
            <person name="Grimmond S.M."/>
            <person name="Teasdale R.D."/>
            <person name="Liu E.T."/>
            <person name="Brusic V."/>
            <person name="Quackenbush J."/>
            <person name="Wahlestedt C."/>
            <person name="Mattick J.S."/>
            <person name="Hume D.A."/>
            <person name="Kai C."/>
            <person name="Sasaki D."/>
            <person name="Tomaru Y."/>
            <person name="Fukuda S."/>
            <person name="Kanamori-Katayama M."/>
            <person name="Suzuki M."/>
            <person name="Aoki J."/>
            <person name="Arakawa T."/>
            <person name="Iida J."/>
            <person name="Imamura K."/>
            <person name="Itoh M."/>
            <person name="Kato T."/>
            <person name="Kawaji H."/>
            <person name="Kawagashira N."/>
            <person name="Kawashima T."/>
            <person name="Kojima M."/>
            <person name="Kondo S."/>
            <person name="Konno H."/>
            <person name="Nakano K."/>
            <person name="Ninomiya N."/>
            <person name="Nishio T."/>
            <person name="Okada M."/>
            <person name="Plessy C."/>
            <person name="Shibata K."/>
            <person name="Shiraki T."/>
            <person name="Suzuki S."/>
            <person name="Tagami M."/>
            <person name="Waki K."/>
            <person name="Watahiki A."/>
            <person name="Okamura-Oho Y."/>
            <person name="Suzuki H."/>
            <person name="Kawai J."/>
            <person name="Hayashizaki Y."/>
        </authorList>
    </citation>
    <scope>NUCLEOTIDE SEQUENCE [LARGE SCALE MRNA]</scope>
    <source>
        <strain>C57BL/6J</strain>
        <tissue>Epididymis</tissue>
    </source>
</reference>
<reference key="2">
    <citation type="journal article" date="2009" name="PLoS Biol.">
        <title>Lineage-specific biology revealed by a finished genome assembly of the mouse.</title>
        <authorList>
            <person name="Church D.M."/>
            <person name="Goodstadt L."/>
            <person name="Hillier L.W."/>
            <person name="Zody M.C."/>
            <person name="Goldstein S."/>
            <person name="She X."/>
            <person name="Bult C.J."/>
            <person name="Agarwala R."/>
            <person name="Cherry J.L."/>
            <person name="DiCuccio M."/>
            <person name="Hlavina W."/>
            <person name="Kapustin Y."/>
            <person name="Meric P."/>
            <person name="Maglott D."/>
            <person name="Birtle Z."/>
            <person name="Marques A.C."/>
            <person name="Graves T."/>
            <person name="Zhou S."/>
            <person name="Teague B."/>
            <person name="Potamousis K."/>
            <person name="Churas C."/>
            <person name="Place M."/>
            <person name="Herschleb J."/>
            <person name="Runnheim R."/>
            <person name="Forrest D."/>
            <person name="Amos-Landgraf J."/>
            <person name="Schwartz D.C."/>
            <person name="Cheng Z."/>
            <person name="Lindblad-Toh K."/>
            <person name="Eichler E.E."/>
            <person name="Ponting C.P."/>
        </authorList>
    </citation>
    <scope>NUCLEOTIDE SEQUENCE [LARGE SCALE GENOMIC DNA]</scope>
    <source>
        <strain>C57BL/6J</strain>
    </source>
</reference>
<reference key="3">
    <citation type="journal article" date="2004" name="Genome Res.">
        <title>The status, quality, and expansion of the NIH full-length cDNA project: the Mammalian Gene Collection (MGC).</title>
        <authorList>
            <consortium name="The MGC Project Team"/>
        </authorList>
    </citation>
    <scope>NUCLEOTIDE SEQUENCE [LARGE SCALE MRNA]</scope>
</reference>
<reference key="4">
    <citation type="journal article" date="1987" name="Mol. Endocrinol.">
        <title>The androgen-dependent mouse seminal vesicle secretory protein IV: characterization and complementary deoxyribonucleic acid cloning.</title>
        <authorList>
            <person name="Chen Y.H."/>
            <person name="Pentecostt B.T."/>
            <person name="McLachlan J.A."/>
            <person name="Teng C.T."/>
        </authorList>
    </citation>
    <scope>NUCLEOTIDE SEQUENCE [MRNA] OF 6-113</scope>
    <scope>PROTEIN SEQUENCE OF 56-108</scope>
    <source>
        <tissue>Seminal vesicle</tissue>
    </source>
</reference>
<name>SVS4_MOUSE</name>
<comment type="subcellular location">
    <subcellularLocation>
        <location>Secreted</location>
        <location>Extracellular space</location>
    </subcellularLocation>
</comment>
<comment type="tissue specificity">
    <text>Testis.</text>
</comment>
<comment type="induction">
    <text>By testosterone.</text>
</comment>
<comment type="similarity">
    <text evidence="2">Belongs to the SVP2/SVP5/SVP6 family.</text>
</comment>
<protein>
    <recommendedName>
        <fullName>Seminal vesicle secretory protein 4</fullName>
    </recommendedName>
    <alternativeName>
        <fullName>Seminal vesicle protein 2</fullName>
    </alternativeName>
    <alternativeName>
        <fullName>Seminal vesicle secretory protein IV</fullName>
        <shortName>SVS IV</shortName>
    </alternativeName>
</protein>
<organism>
    <name type="scientific">Mus musculus</name>
    <name type="common">Mouse</name>
    <dbReference type="NCBI Taxonomy" id="10090"/>
    <lineage>
        <taxon>Eukaryota</taxon>
        <taxon>Metazoa</taxon>
        <taxon>Chordata</taxon>
        <taxon>Craniata</taxon>
        <taxon>Vertebrata</taxon>
        <taxon>Euteleostomi</taxon>
        <taxon>Mammalia</taxon>
        <taxon>Eutheria</taxon>
        <taxon>Euarchontoglires</taxon>
        <taxon>Glires</taxon>
        <taxon>Rodentia</taxon>
        <taxon>Myomorpha</taxon>
        <taxon>Muroidea</taxon>
        <taxon>Muridae</taxon>
        <taxon>Murinae</taxon>
        <taxon>Mus</taxon>
        <taxon>Mus</taxon>
    </lineage>
</organism>
<sequence>MNSTSLFLFSLLLLLVTGAIGKKTKEKFLQSEETVRESFSMGSRGHMSRSSEPEVFVRPQDSIGDEASEEMSSSSSSRRRSKIISSSSDGSNMEGESSYSKRKKSRFSQDALE</sequence>
<evidence type="ECO:0000256" key="1">
    <source>
        <dbReference type="SAM" id="MobiDB-lite"/>
    </source>
</evidence>
<evidence type="ECO:0000305" key="2"/>
<accession>P18419</accession>
<accession>A2A4C3</accession>
<accession>Q14BU4</accession>
<accession>Q9D257</accession>
<gene>
    <name type="primary">Svs4</name>
    <name type="synonym">Svp2</name>
</gene>
<keyword id="KW-0903">Direct protein sequencing</keyword>
<keyword id="KW-1185">Reference proteome</keyword>
<keyword id="KW-0964">Secreted</keyword>
<keyword id="KW-0732">Signal</keyword>